<keyword id="KW-0413">Isomerase</keyword>
<keyword id="KW-1185">Reference proteome</keyword>
<keyword id="KW-0694">RNA-binding</keyword>
<keyword id="KW-0698">rRNA processing</keyword>
<gene>
    <name type="primary">rsuA</name>
    <name type="ordered locus">VC_1635</name>
</gene>
<feature type="chain" id="PRO_0000099975" description="Ribosomal small subunit pseudouridine synthase A">
    <location>
        <begin position="1"/>
        <end position="231"/>
    </location>
</feature>
<feature type="domain" description="S4 RNA-binding" evidence="2">
    <location>
        <begin position="1"/>
        <end position="67"/>
    </location>
</feature>
<feature type="active site" description="Nucleophile" evidence="1">
    <location>
        <position position="101"/>
    </location>
</feature>
<accession>Q9KRK5</accession>
<evidence type="ECO:0000250" key="1"/>
<evidence type="ECO:0000255" key="2">
    <source>
        <dbReference type="PROSITE-ProRule" id="PRU00182"/>
    </source>
</evidence>
<evidence type="ECO:0000305" key="3"/>
<organism>
    <name type="scientific">Vibrio cholerae serotype O1 (strain ATCC 39315 / El Tor Inaba N16961)</name>
    <dbReference type="NCBI Taxonomy" id="243277"/>
    <lineage>
        <taxon>Bacteria</taxon>
        <taxon>Pseudomonadati</taxon>
        <taxon>Pseudomonadota</taxon>
        <taxon>Gammaproteobacteria</taxon>
        <taxon>Vibrionales</taxon>
        <taxon>Vibrionaceae</taxon>
        <taxon>Vibrio</taxon>
    </lineage>
</organism>
<name>RSUA_VIBCH</name>
<proteinExistence type="inferred from homology"/>
<protein>
    <recommendedName>
        <fullName>Ribosomal small subunit pseudouridine synthase A</fullName>
        <ecNumber>5.4.99.19</ecNumber>
    </recommendedName>
    <alternativeName>
        <fullName>16S pseudouridylate 516 synthase</fullName>
    </alternativeName>
    <alternativeName>
        <fullName>16S rRNA pseudouridine(516) synthase</fullName>
    </alternativeName>
    <alternativeName>
        <fullName>rRNA pseudouridylate synthase A</fullName>
    </alternativeName>
    <alternativeName>
        <fullName>rRNA-uridine isomerase A</fullName>
    </alternativeName>
</protein>
<dbReference type="EC" id="5.4.99.19"/>
<dbReference type="EMBL" id="AE003852">
    <property type="protein sequence ID" value="AAF94786.1"/>
    <property type="molecule type" value="Genomic_DNA"/>
</dbReference>
<dbReference type="PIR" id="A82176">
    <property type="entry name" value="A82176"/>
</dbReference>
<dbReference type="RefSeq" id="NP_231272.1">
    <property type="nucleotide sequence ID" value="NC_002505.1"/>
</dbReference>
<dbReference type="RefSeq" id="WP_001234872.1">
    <property type="nucleotide sequence ID" value="NZ_LT906614.1"/>
</dbReference>
<dbReference type="SMR" id="Q9KRK5"/>
<dbReference type="STRING" id="243277.VC_1635"/>
<dbReference type="DNASU" id="2613890"/>
<dbReference type="EnsemblBacteria" id="AAF94786">
    <property type="protein sequence ID" value="AAF94786"/>
    <property type="gene ID" value="VC_1635"/>
</dbReference>
<dbReference type="KEGG" id="vch:VC_1635"/>
<dbReference type="PATRIC" id="fig|243277.26.peg.1563"/>
<dbReference type="eggNOG" id="COG1187">
    <property type="taxonomic scope" value="Bacteria"/>
</dbReference>
<dbReference type="HOGENOM" id="CLU_024979_1_2_6"/>
<dbReference type="Proteomes" id="UP000000584">
    <property type="component" value="Chromosome 1"/>
</dbReference>
<dbReference type="GO" id="GO:0005829">
    <property type="term" value="C:cytosol"/>
    <property type="evidence" value="ECO:0000318"/>
    <property type="project" value="GO_Central"/>
</dbReference>
<dbReference type="GO" id="GO:0160136">
    <property type="term" value="F:16S rRNA pseudouridine(516) synthase activity"/>
    <property type="evidence" value="ECO:0007669"/>
    <property type="project" value="UniProtKB-EC"/>
</dbReference>
<dbReference type="GO" id="GO:0009982">
    <property type="term" value="F:pseudouridine synthase activity"/>
    <property type="evidence" value="ECO:0000318"/>
    <property type="project" value="GO_Central"/>
</dbReference>
<dbReference type="GO" id="GO:0003723">
    <property type="term" value="F:RNA binding"/>
    <property type="evidence" value="ECO:0007669"/>
    <property type="project" value="UniProtKB-KW"/>
</dbReference>
<dbReference type="GO" id="GO:0000455">
    <property type="term" value="P:enzyme-directed rRNA pseudouridine synthesis"/>
    <property type="evidence" value="ECO:0000318"/>
    <property type="project" value="GO_Central"/>
</dbReference>
<dbReference type="CDD" id="cd02553">
    <property type="entry name" value="PseudoU_synth_RsuA"/>
    <property type="match status" value="1"/>
</dbReference>
<dbReference type="CDD" id="cd00165">
    <property type="entry name" value="S4"/>
    <property type="match status" value="1"/>
</dbReference>
<dbReference type="FunFam" id="3.30.70.1560:FF:000001">
    <property type="entry name" value="Pseudouridine synthase"/>
    <property type="match status" value="1"/>
</dbReference>
<dbReference type="Gene3D" id="3.30.70.1560">
    <property type="entry name" value="Alpha-L RNA-binding motif"/>
    <property type="match status" value="1"/>
</dbReference>
<dbReference type="Gene3D" id="3.30.70.580">
    <property type="entry name" value="Pseudouridine synthase I, catalytic domain, N-terminal subdomain"/>
    <property type="match status" value="1"/>
</dbReference>
<dbReference type="Gene3D" id="3.10.290.10">
    <property type="entry name" value="RNA-binding S4 domain"/>
    <property type="match status" value="1"/>
</dbReference>
<dbReference type="InterPro" id="IPR042092">
    <property type="entry name" value="PsdUridine_s_RsuA/RluB/E/F_cat"/>
</dbReference>
<dbReference type="InterPro" id="IPR020103">
    <property type="entry name" value="PsdUridine_synth_cat_dom_sf"/>
</dbReference>
<dbReference type="InterPro" id="IPR006145">
    <property type="entry name" value="PsdUridine_synth_RsuA/RluA"/>
</dbReference>
<dbReference type="InterPro" id="IPR000748">
    <property type="entry name" value="PsdUridine_synth_RsuA/RluB/E/F"/>
</dbReference>
<dbReference type="InterPro" id="IPR018496">
    <property type="entry name" value="PsdUridine_synth_RsuA/RluB_CS"/>
</dbReference>
<dbReference type="InterPro" id="IPR050343">
    <property type="entry name" value="RsuA_PseudoU_synthase"/>
</dbReference>
<dbReference type="InterPro" id="IPR002942">
    <property type="entry name" value="S4_RNA-bd"/>
</dbReference>
<dbReference type="InterPro" id="IPR036986">
    <property type="entry name" value="S4_RNA-bd_sf"/>
</dbReference>
<dbReference type="InterPro" id="IPR020094">
    <property type="entry name" value="TruA/RsuA/RluB/E/F_N"/>
</dbReference>
<dbReference type="NCBIfam" id="NF008097">
    <property type="entry name" value="PRK10839.1"/>
    <property type="match status" value="1"/>
</dbReference>
<dbReference type="NCBIfam" id="TIGR00093">
    <property type="entry name" value="pseudouridine synthase"/>
    <property type="match status" value="1"/>
</dbReference>
<dbReference type="PANTHER" id="PTHR47683:SF4">
    <property type="entry name" value="PSEUDOURIDINE SYNTHASE"/>
    <property type="match status" value="1"/>
</dbReference>
<dbReference type="PANTHER" id="PTHR47683">
    <property type="entry name" value="PSEUDOURIDINE SYNTHASE FAMILY PROTEIN-RELATED"/>
    <property type="match status" value="1"/>
</dbReference>
<dbReference type="Pfam" id="PF00849">
    <property type="entry name" value="PseudoU_synth_2"/>
    <property type="match status" value="1"/>
</dbReference>
<dbReference type="Pfam" id="PF01479">
    <property type="entry name" value="S4"/>
    <property type="match status" value="1"/>
</dbReference>
<dbReference type="SMART" id="SM00363">
    <property type="entry name" value="S4"/>
    <property type="match status" value="1"/>
</dbReference>
<dbReference type="SUPFAM" id="SSF55174">
    <property type="entry name" value="Alpha-L RNA-binding motif"/>
    <property type="match status" value="1"/>
</dbReference>
<dbReference type="SUPFAM" id="SSF55120">
    <property type="entry name" value="Pseudouridine synthase"/>
    <property type="match status" value="1"/>
</dbReference>
<dbReference type="PROSITE" id="PS01149">
    <property type="entry name" value="PSI_RSU"/>
    <property type="match status" value="1"/>
</dbReference>
<dbReference type="PROSITE" id="PS50889">
    <property type="entry name" value="S4"/>
    <property type="match status" value="1"/>
</dbReference>
<sequence length="231" mass="26362">MRLDKFLCDALGTTRKEATQLLKSGEVTVDDVVQKSGAFKLKETSCVEWQGREITLHGPRYIMMHKPDGVVCSHEDGFNQTALTLLDEVNIQDLHFAGRLDVDTTGLLLITDDGQWSHRVTSPKHKCEKTYRVWLADPIQADYAEQFNRGIELRGERELTLPAQLEVISETEVLLTIHEGKYHQVKRMFAALGNKVIGLHRERIGQITLDETLEPGEYRYLTEEEVASIWK</sequence>
<comment type="function">
    <text evidence="1">Responsible for synthesis of pseudouridine from uracil-516 in 16S ribosomal RNA.</text>
</comment>
<comment type="catalytic activity">
    <reaction>
        <text>uridine(516) in 16S rRNA = pseudouridine(516) in 16S rRNA</text>
        <dbReference type="Rhea" id="RHEA:38867"/>
        <dbReference type="Rhea" id="RHEA-COMP:10089"/>
        <dbReference type="Rhea" id="RHEA-COMP:10090"/>
        <dbReference type="ChEBI" id="CHEBI:65314"/>
        <dbReference type="ChEBI" id="CHEBI:65315"/>
        <dbReference type="EC" id="5.4.99.19"/>
    </reaction>
</comment>
<comment type="similarity">
    <text evidence="3">Belongs to the pseudouridine synthase RsuA family.</text>
</comment>
<reference key="1">
    <citation type="journal article" date="2000" name="Nature">
        <title>DNA sequence of both chromosomes of the cholera pathogen Vibrio cholerae.</title>
        <authorList>
            <person name="Heidelberg J.F."/>
            <person name="Eisen J.A."/>
            <person name="Nelson W.C."/>
            <person name="Clayton R.A."/>
            <person name="Gwinn M.L."/>
            <person name="Dodson R.J."/>
            <person name="Haft D.H."/>
            <person name="Hickey E.K."/>
            <person name="Peterson J.D."/>
            <person name="Umayam L.A."/>
            <person name="Gill S.R."/>
            <person name="Nelson K.E."/>
            <person name="Read T.D."/>
            <person name="Tettelin H."/>
            <person name="Richardson D.L."/>
            <person name="Ermolaeva M.D."/>
            <person name="Vamathevan J.J."/>
            <person name="Bass S."/>
            <person name="Qin H."/>
            <person name="Dragoi I."/>
            <person name="Sellers P."/>
            <person name="McDonald L.A."/>
            <person name="Utterback T.R."/>
            <person name="Fleischmann R.D."/>
            <person name="Nierman W.C."/>
            <person name="White O."/>
            <person name="Salzberg S.L."/>
            <person name="Smith H.O."/>
            <person name="Colwell R.R."/>
            <person name="Mekalanos J.J."/>
            <person name="Venter J.C."/>
            <person name="Fraser C.M."/>
        </authorList>
    </citation>
    <scope>NUCLEOTIDE SEQUENCE [LARGE SCALE GENOMIC DNA]</scope>
    <source>
        <strain>ATCC 39315 / El Tor Inaba N16961</strain>
    </source>
</reference>